<protein>
    <recommendedName>
        <fullName evidence="1">UPF0173 metal-dependent hydrolase Mlab_1154</fullName>
    </recommendedName>
</protein>
<evidence type="ECO:0000255" key="1">
    <source>
        <dbReference type="HAMAP-Rule" id="MF_00457"/>
    </source>
</evidence>
<feature type="chain" id="PRO_0000367231" description="UPF0173 metal-dependent hydrolase Mlab_1154">
    <location>
        <begin position="1"/>
        <end position="219"/>
    </location>
</feature>
<dbReference type="EMBL" id="CP000559">
    <property type="protein sequence ID" value="ABN07323.1"/>
    <property type="molecule type" value="Genomic_DNA"/>
</dbReference>
<dbReference type="RefSeq" id="WP_011833526.1">
    <property type="nucleotide sequence ID" value="NC_008942.1"/>
</dbReference>
<dbReference type="SMR" id="A2SSL7"/>
<dbReference type="STRING" id="410358.Mlab_1154"/>
<dbReference type="GeneID" id="4796133"/>
<dbReference type="KEGG" id="mla:Mlab_1154"/>
<dbReference type="eggNOG" id="arCOG00497">
    <property type="taxonomic scope" value="Archaea"/>
</dbReference>
<dbReference type="HOGENOM" id="CLU_070010_4_1_2"/>
<dbReference type="OrthoDB" id="28313at2157"/>
<dbReference type="Proteomes" id="UP000000365">
    <property type="component" value="Chromosome"/>
</dbReference>
<dbReference type="GO" id="GO:0016787">
    <property type="term" value="F:hydrolase activity"/>
    <property type="evidence" value="ECO:0007669"/>
    <property type="project" value="UniProtKB-UniRule"/>
</dbReference>
<dbReference type="Gene3D" id="3.60.15.10">
    <property type="entry name" value="Ribonuclease Z/Hydroxyacylglutathione hydrolase-like"/>
    <property type="match status" value="1"/>
</dbReference>
<dbReference type="HAMAP" id="MF_00457">
    <property type="entry name" value="UPF0173"/>
    <property type="match status" value="1"/>
</dbReference>
<dbReference type="InterPro" id="IPR001279">
    <property type="entry name" value="Metallo-B-lactamas"/>
</dbReference>
<dbReference type="InterPro" id="IPR036866">
    <property type="entry name" value="RibonucZ/Hydroxyglut_hydro"/>
</dbReference>
<dbReference type="InterPro" id="IPR022877">
    <property type="entry name" value="UPF0173"/>
</dbReference>
<dbReference type="InterPro" id="IPR050114">
    <property type="entry name" value="UPF0173_UPF0282_UlaG_hydrolase"/>
</dbReference>
<dbReference type="NCBIfam" id="NF001911">
    <property type="entry name" value="PRK00685.1"/>
    <property type="match status" value="1"/>
</dbReference>
<dbReference type="PANTHER" id="PTHR43546:SF3">
    <property type="entry name" value="UPF0173 METAL-DEPENDENT HYDROLASE MJ1163"/>
    <property type="match status" value="1"/>
</dbReference>
<dbReference type="PANTHER" id="PTHR43546">
    <property type="entry name" value="UPF0173 METAL-DEPENDENT HYDROLASE MJ1163-RELATED"/>
    <property type="match status" value="1"/>
</dbReference>
<dbReference type="Pfam" id="PF13483">
    <property type="entry name" value="Lactamase_B_3"/>
    <property type="match status" value="1"/>
</dbReference>
<dbReference type="SMART" id="SM00849">
    <property type="entry name" value="Lactamase_B"/>
    <property type="match status" value="1"/>
</dbReference>
<dbReference type="SUPFAM" id="SSF56281">
    <property type="entry name" value="Metallo-hydrolase/oxidoreductase"/>
    <property type="match status" value="1"/>
</dbReference>
<organism>
    <name type="scientific">Methanocorpusculum labreanum (strain ATCC 43576 / DSM 4855 / Z)</name>
    <dbReference type="NCBI Taxonomy" id="410358"/>
    <lineage>
        <taxon>Archaea</taxon>
        <taxon>Methanobacteriati</taxon>
        <taxon>Methanobacteriota</taxon>
        <taxon>Stenosarchaea group</taxon>
        <taxon>Methanomicrobia</taxon>
        <taxon>Methanomicrobiales</taxon>
        <taxon>Methanocorpusculaceae</taxon>
        <taxon>Methanocorpusculum</taxon>
    </lineage>
</organism>
<comment type="similarity">
    <text evidence="1">Belongs to the UPF0173 family.</text>
</comment>
<reference key="1">
    <citation type="journal article" date="2009" name="Stand. Genomic Sci.">
        <title>Complete genome sequence of Methanocorpusculum labreanum type strain Z.</title>
        <authorList>
            <person name="Anderson I.J."/>
            <person name="Sieprawska-Lupa M."/>
            <person name="Goltsman E."/>
            <person name="Lapidus A."/>
            <person name="Copeland A."/>
            <person name="Glavina Del Rio T."/>
            <person name="Tice H."/>
            <person name="Dalin E."/>
            <person name="Barry K."/>
            <person name="Pitluck S."/>
            <person name="Hauser L."/>
            <person name="Land M."/>
            <person name="Lucas S."/>
            <person name="Richardson P."/>
            <person name="Whitman W.B."/>
            <person name="Kyrpides N.C."/>
        </authorList>
    </citation>
    <scope>NUCLEOTIDE SEQUENCE [LARGE SCALE GENOMIC DNA]</scope>
    <source>
        <strain>ATCC 43576 / DSM 4855 / Z</strain>
    </source>
</reference>
<accession>A2SSL7</accession>
<proteinExistence type="inferred from homology"/>
<name>Y1154_METLZ</name>
<keyword id="KW-0378">Hydrolase</keyword>
<keyword id="KW-1185">Reference proteome</keyword>
<gene>
    <name type="ordered locus">Mlab_1154</name>
</gene>
<sequence>MQIRYAGHSCFIIEGSKKLLFDPMPLEDPAAVEADLTLISHAHADHIGDAFARFSLTIAVHELSGYLKSLGVKTIGMNIGGSVEWEGITVRMVPATHSSSIRQKDGTSLYMGQACGFVVEMDGHVIYYAGDTGLFSDMKLIRELYHPDIAILPAGGRYTMGPEECMMAAAWIGAKTVIPMHVNTYPEIEQDMPAFKRAIELTTVMHVEIMQPDDVLELP</sequence>